<feature type="chain" id="PRO_0000424176" description="Alpha-amylase">
    <location>
        <begin position="1"/>
        <end position="10" status="greater than"/>
    </location>
</feature>
<feature type="non-terminal residue" evidence="3">
    <location>
        <position position="10"/>
    </location>
</feature>
<evidence type="ECO:0000250" key="1">
    <source>
        <dbReference type="UniProtKB" id="P00691"/>
    </source>
</evidence>
<evidence type="ECO:0000269" key="2">
    <source ref="1"/>
</evidence>
<evidence type="ECO:0000303" key="3">
    <source ref="1"/>
</evidence>
<evidence type="ECO:0000305" key="4"/>
<sequence length="10" mass="1150">MLVGKKVQTF</sequence>
<comment type="catalytic activity">
    <reaction evidence="2">
        <text>Endohydrolysis of (1-&gt;4)-alpha-D-glucosidic linkages in polysaccharides containing three or more (1-&gt;4)-alpha-linked D-glucose units.</text>
        <dbReference type="EC" id="3.2.1.1"/>
    </reaction>
</comment>
<comment type="biophysicochemical properties">
    <kinetics>
        <text evidence="2">Because of the indeterminate molecular weight of starch, an approximate KM value of 0.975 mg/ml was determined.</text>
    </kinetics>
    <phDependence>
        <text evidence="2">Optimum pH is 5.0.</text>
    </phDependence>
    <temperatureDependence>
        <text evidence="2">Optimum temperature is 60 degrees Celsius.</text>
    </temperatureDependence>
</comment>
<comment type="miscellaneous">
    <text evidence="2">On the 2D-gel the determined pI of this protein is: 5.0, its MW is: 155 kDa.</text>
</comment>
<comment type="similarity">
    <text evidence="4">Belongs to the glycosyl hydrolase 13 family.</text>
</comment>
<dbReference type="EC" id="3.2.1.1" evidence="2"/>
<dbReference type="GO" id="GO:0004556">
    <property type="term" value="F:alpha-amylase activity"/>
    <property type="evidence" value="ECO:0007669"/>
    <property type="project" value="UniProtKB-EC"/>
</dbReference>
<dbReference type="GO" id="GO:0000272">
    <property type="term" value="P:polysaccharide catabolic process"/>
    <property type="evidence" value="ECO:0007669"/>
    <property type="project" value="UniProtKB-KW"/>
</dbReference>
<reference evidence="4" key="1">
    <citation type="submission" date="2013-08" db="UniProtKB">
        <title>Purification and characterization of thermostable alpha-amylase from Bacillus firmus KIBGE-IB28.</title>
        <authorList>
            <person name="Zohra R.R."/>
            <person name="Nawaz A."/>
            <person name="Bibi Z."/>
            <person name="Aman A."/>
            <person name="Qader S.A."/>
        </authorList>
    </citation>
    <scope>PROTEIN SEQUENCE</scope>
    <scope>CATALYTIC ACTIVITY</scope>
    <scope>BIOPHYSICOCHEMICAL PROPERTIES</scope>
    <source>
        <strain evidence="2">KIBGE-IB28</strain>
    </source>
</reference>
<protein>
    <recommendedName>
        <fullName evidence="3">Alpha-amylase</fullName>
        <ecNumber evidence="2">3.2.1.1</ecNumber>
    </recommendedName>
    <alternativeName>
        <fullName evidence="1">1,4-alpha-D-glucan glucanohydrolase</fullName>
    </alternativeName>
</protein>
<proteinExistence type="evidence at protein level"/>
<organism>
    <name type="scientific">Cytobacillus firmus</name>
    <name type="common">Bacillus firmus</name>
    <dbReference type="NCBI Taxonomy" id="1399"/>
    <lineage>
        <taxon>Bacteria</taxon>
        <taxon>Bacillati</taxon>
        <taxon>Bacillota</taxon>
        <taxon>Bacilli</taxon>
        <taxon>Bacillales</taxon>
        <taxon>Bacillaceae</taxon>
        <taxon>Cytobacillus</taxon>
    </lineage>
</organism>
<name>AMY1_CYTFI</name>
<accession>C0HJE4</accession>
<keyword id="KW-0119">Carbohydrate metabolism</keyword>
<keyword id="KW-0903">Direct protein sequencing</keyword>
<keyword id="KW-0326">Glycosidase</keyword>
<keyword id="KW-0378">Hydrolase</keyword>
<keyword id="KW-0624">Polysaccharide degradation</keyword>